<protein>
    <recommendedName>
        <fullName>Inter-alpha-trypsin inhibitor heavy chain H2</fullName>
        <shortName>ITI heavy chain H2</shortName>
        <shortName>ITI-HC2</shortName>
        <shortName>Inter-alpha-inhibitor heavy chain 2</shortName>
    </recommendedName>
</protein>
<reference key="1">
    <citation type="journal article" date="1997" name="J. Biochem.">
        <title>Molecular cloning and sequencing of cDNAs encoding three heavy-chain precursors of the inter-alpha-trypsin inhibitor in Syrian hamster: implications for the evolution of the inter-alpha-trypsin inhibitor heavy chain family.</title>
        <authorList>
            <person name="Nakatani T."/>
            <person name="Suzuki Y."/>
            <person name="Yamamoto T."/>
            <person name="Sinohara H."/>
        </authorList>
    </citation>
    <scope>NUCLEOTIDE SEQUENCE [MRNA]</scope>
    <source>
        <tissue>Liver</tissue>
    </source>
</reference>
<reference key="2">
    <citation type="journal article" date="1996" name="J. Biochem.">
        <title>Inter-alpha-trypsin inhibitor and its related proteins in Syrian hamster urine and plasma.</title>
        <authorList>
            <person name="Yamamoto T."/>
            <person name="Yamamoto K."/>
            <person name="Sinohara H."/>
        </authorList>
    </citation>
    <scope>PROTEIN SEQUENCE OF 55-64; 140-146; 151-156; 424-447; 500-528 AND 577-605</scope>
    <scope>SUBUNIT</scope>
    <source>
        <tissue>Plasma</tissue>
    </source>
</reference>
<accession>P97279</accession>
<feature type="signal peptide" evidence="3">
    <location>
        <begin position="1"/>
        <end position="18"/>
    </location>
</feature>
<feature type="propeptide" id="PRO_0000016523" evidence="1">
    <location>
        <begin position="19"/>
        <end position="54"/>
    </location>
</feature>
<feature type="chain" id="PRO_0000016524" description="Inter-alpha-trypsin inhibitor heavy chain H2">
    <location>
        <begin position="55"/>
        <end position="702"/>
    </location>
</feature>
<feature type="propeptide" id="PRO_0000016525" evidence="1">
    <location>
        <begin position="703"/>
        <end position="946"/>
    </location>
</feature>
<feature type="domain" description="VIT" evidence="5">
    <location>
        <begin position="56"/>
        <end position="185"/>
    </location>
</feature>
<feature type="domain" description="VWFA" evidence="4">
    <location>
        <begin position="308"/>
        <end position="468"/>
    </location>
</feature>
<feature type="modified residue" description="Phosphoserine" evidence="2">
    <location>
        <position position="60"/>
    </location>
</feature>
<feature type="modified residue" description="4-carboxyglutamate" evidence="2">
    <location>
        <position position="282"/>
    </location>
</feature>
<feature type="modified residue" description="4-carboxyglutamate" evidence="2">
    <location>
        <position position="283"/>
    </location>
</feature>
<feature type="modified residue" description="Phosphoserine" evidence="2">
    <location>
        <position position="466"/>
    </location>
</feature>
<feature type="modified residue" description="Aspartate 1-(chondroitin 4-sulfate)-ester" evidence="1">
    <location>
        <position position="702"/>
    </location>
</feature>
<feature type="modified residue" description="Phosphoserine" evidence="2">
    <location>
        <position position="886"/>
    </location>
</feature>
<feature type="glycosylation site" description="N-linked (GlcNAc...) asparagine" evidence="3">
    <location>
        <position position="118"/>
    </location>
</feature>
<feature type="glycosylation site" description="N-linked (GlcNAc...) asparagine" evidence="3">
    <location>
        <position position="263"/>
    </location>
</feature>
<feature type="glycosylation site" description="N-linked (GlcNAc...) asparagine" evidence="3">
    <location>
        <position position="445"/>
    </location>
</feature>
<feature type="glycosylation site" description="N-linked (GlcNAc...) asparagine" evidence="3">
    <location>
        <position position="578"/>
    </location>
</feature>
<feature type="sequence conflict" description="In Ref. 2; AA sequence." evidence="6" ref="2">
    <original>V</original>
    <variation>Y</variation>
    <location>
        <position position="510"/>
    </location>
</feature>
<feature type="sequence conflict" description="In Ref. 2; AA sequence." evidence="6" ref="2">
    <original>E</original>
    <variation>I</variation>
    <location>
        <position position="595"/>
    </location>
</feature>
<organism>
    <name type="scientific">Mesocricetus auratus</name>
    <name type="common">Golden hamster</name>
    <dbReference type="NCBI Taxonomy" id="10036"/>
    <lineage>
        <taxon>Eukaryota</taxon>
        <taxon>Metazoa</taxon>
        <taxon>Chordata</taxon>
        <taxon>Craniata</taxon>
        <taxon>Vertebrata</taxon>
        <taxon>Euteleostomi</taxon>
        <taxon>Mammalia</taxon>
        <taxon>Eutheria</taxon>
        <taxon>Euarchontoglires</taxon>
        <taxon>Glires</taxon>
        <taxon>Rodentia</taxon>
        <taxon>Myomorpha</taxon>
        <taxon>Muroidea</taxon>
        <taxon>Cricetidae</taxon>
        <taxon>Cricetinae</taxon>
        <taxon>Mesocricetus</taxon>
    </lineage>
</organism>
<gene>
    <name type="primary">ITIH2</name>
</gene>
<sequence>MQRLACVLIWLFLLEEQAFEIPANEYSEFAGYSNLVELAPDKFPFVQENRRYQRSLPEESGEMTDNVDQVTLYSYKVQSTITSRMATTIIQSKLVNNSPQSQNVVFDVQIPKGAFISNFTMTVNGITFTSTIREKTVGRALYSQARAKGKTAGWVRSRTLDMENFNTEVNIPPGAKVQFELHYQEMKWRKLGSYEHKIHLQPGRLAKHLEVNVWIVELQGMRFLHVPDTFEGHFQGVPVISKGQKKSHVSFKPTVAQQRKCPNCTYTAVDGELVVMYDVNREEKVGELEVFNGYFVHFFAPENLDPIPKNILFVIDVSGSMWGIKMKQTVEAMKTILDDLRTEDQFSVVDFNHNVRTWRNDLVSATKTQITDAKRYIEKIQPSGGTNINEALLRAIFILNEASNLGMLNPDSVSLIVLVSDGDPTVGELKLSKIQKNVKQNIQDNISLFSLGIGFDVDYDFLKRLSNENRGIAQRIYGNRDTSSQLKKFYNQVSTPLLRNVQFNYPQASVTDVTQNSFHNYFGGSEIVVAGKYDPSKLAEVQSIITATSTNTELVLETLSQMDDLEDFLSKDKHADPNFTKKLWAYLTINQLLAERSLAPTAAIKRKITKTILQMSLDHHIVTPLTAMVIENEAGDERMLADSPPQDHSCCSGALYYGTKVASASIPSWASPSPTPVMAMLAVGANRLESTPPPHVIRVENDPHFIIYLPKSQKNICFNIDSEPGKILSLVSDPESGILVNGQLIGAKKAENGKLRTYFGKLGFYFQKEDMKIEISTENITLINGSSTTSLFWSDTAHLGNQRVLISVKKGKSVTLTLNKEMFFSVLLHHVWKKHPVNVDFLGIYLPPTNKFSPSAHGLLGQFMNKPNIHIFNERPGKDPEKPEASMEVKGHKLTVTRGLQKDYRTDIAFGTDVPCWFVHNSGKGFIDGHYKDYLVPQLYSFLKRP</sequence>
<comment type="function">
    <text evidence="1">May act as a carrier of hyaluronan in serum or as a binding protein between hyaluronan and other matrix protein, including those on cell surfaces in tissues to regulate the localization, synthesis and degradation of hyaluronan which are essential to cells undergoing biological processes.</text>
</comment>
<comment type="subunit">
    <text evidence="2">I-alpha-I plasma protease inhibitors are assembled from one or two heavy chains (HC) and one light chain, bikunin. Inter-alpha-inhibitor (I-alpha-I) is composed of ITIH1/HC1, ITIH2/HC2 and bikunin.</text>
</comment>
<comment type="subcellular location">
    <subcellularLocation>
        <location>Secreted</location>
    </subcellularLocation>
</comment>
<comment type="PTM">
    <text evidence="1">Heavy chains are linked to bikunin via chondroitin 4-sulfate esterified to the alpha-carboxyl of the C-terminal aspartate after propeptide cleavage.</text>
</comment>
<comment type="PTM">
    <text evidence="2">Phosphorylated by FAM20C in the extracellular medium.</text>
</comment>
<comment type="similarity">
    <text evidence="6">Belongs to the ITIH family.</text>
</comment>
<keyword id="KW-0903">Direct protein sequencing</keyword>
<keyword id="KW-0301">Gamma-carboxyglutamic acid</keyword>
<keyword id="KW-0325">Glycoprotein</keyword>
<keyword id="KW-0597">Phosphoprotein</keyword>
<keyword id="KW-0646">Protease inhibitor</keyword>
<keyword id="KW-0654">Proteoglycan</keyword>
<keyword id="KW-1185">Reference proteome</keyword>
<keyword id="KW-0964">Secreted</keyword>
<keyword id="KW-0722">Serine protease inhibitor</keyword>
<keyword id="KW-0732">Signal</keyword>
<name>ITIH2_MESAU</name>
<evidence type="ECO:0000250" key="1"/>
<evidence type="ECO:0000250" key="2">
    <source>
        <dbReference type="UniProtKB" id="P19823"/>
    </source>
</evidence>
<evidence type="ECO:0000255" key="3"/>
<evidence type="ECO:0000255" key="4">
    <source>
        <dbReference type="PROSITE-ProRule" id="PRU00219"/>
    </source>
</evidence>
<evidence type="ECO:0000255" key="5">
    <source>
        <dbReference type="PROSITE-ProRule" id="PRU00801"/>
    </source>
</evidence>
<evidence type="ECO:0000305" key="6"/>
<proteinExistence type="evidence at protein level"/>
<dbReference type="EMBL" id="D89286">
    <property type="protein sequence ID" value="BAA13939.1"/>
    <property type="molecule type" value="mRNA"/>
</dbReference>
<dbReference type="PIR" id="JC5575">
    <property type="entry name" value="JC5575"/>
</dbReference>
<dbReference type="RefSeq" id="NP_001268591.1">
    <property type="nucleotide sequence ID" value="NM_001281662.1"/>
</dbReference>
<dbReference type="SMR" id="P97279"/>
<dbReference type="STRING" id="10036.ENSMAUP00000012101"/>
<dbReference type="GlyCosmos" id="P97279">
    <property type="glycosylation" value="4 sites, No reported glycans"/>
</dbReference>
<dbReference type="GeneID" id="101837243"/>
<dbReference type="KEGG" id="maua:101837243"/>
<dbReference type="CTD" id="3698"/>
<dbReference type="eggNOG" id="ENOG502QPS2">
    <property type="taxonomic scope" value="Eukaryota"/>
</dbReference>
<dbReference type="OrthoDB" id="299997at2759"/>
<dbReference type="Proteomes" id="UP000189706">
    <property type="component" value="Unplaced"/>
</dbReference>
<dbReference type="GO" id="GO:0005576">
    <property type="term" value="C:extracellular region"/>
    <property type="evidence" value="ECO:0007669"/>
    <property type="project" value="UniProtKB-SubCell"/>
</dbReference>
<dbReference type="GO" id="GO:0004867">
    <property type="term" value="F:serine-type endopeptidase inhibitor activity"/>
    <property type="evidence" value="ECO:0007669"/>
    <property type="project" value="UniProtKB-KW"/>
</dbReference>
<dbReference type="GO" id="GO:0030212">
    <property type="term" value="P:hyaluronan metabolic process"/>
    <property type="evidence" value="ECO:0007669"/>
    <property type="project" value="InterPro"/>
</dbReference>
<dbReference type="CDD" id="cd01461">
    <property type="entry name" value="vWA_interalpha_trypsin_inhibitor"/>
    <property type="match status" value="1"/>
</dbReference>
<dbReference type="FunFam" id="3.40.50.410:FF:000013">
    <property type="entry name" value="inter-alpha-trypsin inhibitor heavy chain H2"/>
    <property type="match status" value="1"/>
</dbReference>
<dbReference type="Gene3D" id="3.40.50.410">
    <property type="entry name" value="von Willebrand factor, type A domain"/>
    <property type="match status" value="1"/>
</dbReference>
<dbReference type="InterPro" id="IPR010600">
    <property type="entry name" value="ITI_HC_C"/>
</dbReference>
<dbReference type="InterPro" id="IPR050934">
    <property type="entry name" value="ITIH"/>
</dbReference>
<dbReference type="InterPro" id="IPR013694">
    <property type="entry name" value="VIT"/>
</dbReference>
<dbReference type="InterPro" id="IPR002035">
    <property type="entry name" value="VWF_A"/>
</dbReference>
<dbReference type="InterPro" id="IPR036465">
    <property type="entry name" value="vWFA_dom_sf"/>
</dbReference>
<dbReference type="PANTHER" id="PTHR10338">
    <property type="entry name" value="INTER-ALPHA-TRYPSIN INHIBITOR HEAVY CHAIN FAMILY MEMBER"/>
    <property type="match status" value="1"/>
</dbReference>
<dbReference type="PANTHER" id="PTHR10338:SF14">
    <property type="entry name" value="INTER-ALPHA-TRYPSIN INHIBITOR HEAVY CHAIN H2"/>
    <property type="match status" value="1"/>
</dbReference>
<dbReference type="Pfam" id="PF06668">
    <property type="entry name" value="ITI_HC_C"/>
    <property type="match status" value="1"/>
</dbReference>
<dbReference type="Pfam" id="PF08487">
    <property type="entry name" value="VIT"/>
    <property type="match status" value="1"/>
</dbReference>
<dbReference type="Pfam" id="PF00092">
    <property type="entry name" value="VWA"/>
    <property type="match status" value="1"/>
</dbReference>
<dbReference type="SMART" id="SM00609">
    <property type="entry name" value="VIT"/>
    <property type="match status" value="1"/>
</dbReference>
<dbReference type="SMART" id="SM00327">
    <property type="entry name" value="VWA"/>
    <property type="match status" value="1"/>
</dbReference>
<dbReference type="SUPFAM" id="SSF53300">
    <property type="entry name" value="vWA-like"/>
    <property type="match status" value="1"/>
</dbReference>
<dbReference type="PROSITE" id="PS51468">
    <property type="entry name" value="VIT"/>
    <property type="match status" value="1"/>
</dbReference>
<dbReference type="PROSITE" id="PS50234">
    <property type="entry name" value="VWFA"/>
    <property type="match status" value="1"/>
</dbReference>